<comment type="function">
    <text evidence="1 6 8">Acts as a co-chaperone regulating the molecular chaperones HSP70 and HSP90 in folding of steroid receptors, such as the glucocorticoid receptor and the progesterone receptor. Proposed to act as a recycling chaperone by facilitating the return of chaperone substrates to early stages of chaperoning if further folding is required. In vitro, induces ATP-independent dissociation of HSP90 but not of HSP70 from the chaperone-substrate complexes. Recruits NR1I3 to the cytoplasm (By similarity).</text>
</comment>
<comment type="subunit">
    <text evidence="1 4 5 6 7 8">Associates with complexes containing chaperones HSP70 and HSP90. Interacts with the GAP domain of NF1. Interacts with HSP90AA1. Interacts with HSPA1A/B; the interaction is enhanced by ATP. Interacts with HSP90AB1. Interacts with PGR. Interacts with RAD9A; the interaction is interrupted by UV and heat shock treatments. Interacts with HUS1 and RAD1. Interacts with NR1I3. The DNAJC7-NR1I3 complex may also include HSP90 (By similarity). Interacts with HSPA8.</text>
</comment>
<comment type="interaction">
    <interactant intactId="EBI-357552">
        <id>Q99615</id>
    </interactant>
    <interactant intactId="EBI-355275">
        <id>O95816</id>
        <label>BAG2</label>
    </interactant>
    <organismsDiffer>false</organismsDiffer>
    <experiments>4</experiments>
</comment>
<comment type="interaction">
    <interactant intactId="EBI-357552">
        <id>Q99615</id>
    </interactant>
    <interactant intactId="EBI-2949658">
        <id>O95429</id>
        <label>BAG4</label>
    </interactant>
    <organismsDiffer>false</organismsDiffer>
    <experiments>3</experiments>
</comment>
<comment type="interaction">
    <interactant intactId="EBI-357552">
        <id>Q99615</id>
    </interactant>
    <interactant intactId="EBI-529989">
        <id>Q9NRI5</id>
        <label>DISC1</label>
    </interactant>
    <organismsDiffer>false</organismsDiffer>
    <experiments>3</experiments>
</comment>
<comment type="interaction">
    <interactant intactId="EBI-357552">
        <id>Q99615</id>
    </interactant>
    <interactant intactId="EBI-779991">
        <id>P12504</id>
        <label>vif</label>
    </interactant>
    <organismsDiffer>true</organismsDiffer>
    <experiments>3</experiments>
</comment>
<comment type="subcellular location">
    <subcellularLocation>
        <location evidence="5 6">Cytoplasm</location>
    </subcellularLocation>
    <subcellularLocation>
        <location evidence="5">Nucleus</location>
    </subcellularLocation>
    <subcellularLocation>
        <location evidence="2">Cytoplasm</location>
        <location evidence="2">Cytoskeleton</location>
    </subcellularLocation>
    <text evidence="2">Colocalizes with NR1I3 to microtubules.</text>
</comment>
<comment type="alternative products">
    <event type="alternative splicing"/>
    <isoform>
        <id>Q99615-1</id>
        <name>1</name>
        <sequence type="displayed"/>
    </isoform>
    <isoform>
        <id>Q99615-2</id>
        <name>2</name>
        <sequence type="described" ref="VSP_044279"/>
    </isoform>
</comment>
<comment type="sequence caution" evidence="12">
    <conflict type="erroneous initiation">
        <sequence resource="EMBL-CDS" id="AAB36872"/>
    </conflict>
    <text>Truncated N-terminus.</text>
</comment>
<comment type="sequence caution" evidence="12">
    <conflict type="erroneous initiation">
        <sequence resource="EMBL-CDS" id="AAH33772"/>
    </conflict>
    <text>Truncated N-terminus.</text>
</comment>
<evidence type="ECO:0000250" key="1"/>
<evidence type="ECO:0000250" key="2">
    <source>
        <dbReference type="UniProtKB" id="Q9QYI3"/>
    </source>
</evidence>
<evidence type="ECO:0000255" key="3">
    <source>
        <dbReference type="PROSITE-ProRule" id="PRU00286"/>
    </source>
</evidence>
<evidence type="ECO:0000269" key="4">
    <source>
    </source>
</evidence>
<evidence type="ECO:0000269" key="5">
    <source>
    </source>
</evidence>
<evidence type="ECO:0000269" key="6">
    <source>
    </source>
</evidence>
<evidence type="ECO:0000269" key="7">
    <source>
    </source>
</evidence>
<evidence type="ECO:0000269" key="8">
    <source>
    </source>
</evidence>
<evidence type="ECO:0000269" key="9">
    <source ref="6"/>
</evidence>
<evidence type="ECO:0000303" key="10">
    <source>
    </source>
</evidence>
<evidence type="ECO:0000303" key="11">
    <source>
    </source>
</evidence>
<evidence type="ECO:0000305" key="12"/>
<evidence type="ECO:0007744" key="13">
    <source>
    </source>
</evidence>
<evidence type="ECO:0007744" key="14">
    <source>
    </source>
</evidence>
<gene>
    <name type="primary">DNAJC7</name>
    <name type="synonym">TPR2</name>
    <name type="synonym">TTC2</name>
</gene>
<sequence length="494" mass="56441">MAAAAECDVVMAATEPELLDDQEAKREAETFKEQGNAYYAKKDYNEAYNYYTKAIDMCPKNASYYGNRAATLMMLGRFREALGDAQQSVRLDDSFVRGHLREGKCHLSLGNAMAACRSFQRALELDHKNAQAQQEFKNANAVMEYEKIAETDFEKRDFRKVVFCMDRALEFAPACHRFKILKAECLAMLGRYPEAQSVASDILRMDSTNADALYVRGLCLYYEDCIEKAVQFFVQALRMAPDHEKACIACRNAKALKAKKEDGNKAFKEGNYKLAYELYTEALGIDPNNIKTNAKLYCNRGTVNSKLRKLDDAIEDCTNAVKLDDTYIKAYLRRAQCYMDTEQYEEAVRDYEKVYQTEKTKEHKQLLKNAQLELKKSKRKDYYKILGVDKNASEDEIKKAYRKRALMHHPDRHSGASAEVQKEEEKKFKEVGEAFTILSDPKKKTRYDSGQDLDEEGMNMGDFDPNNIFKAFFGGPGGFSFEASGPGNFFFQFG</sequence>
<reference key="1">
    <citation type="journal article" date="2004" name="Nat. Genet.">
        <title>Complete sequencing and characterization of 21,243 full-length human cDNAs.</title>
        <authorList>
            <person name="Ota T."/>
            <person name="Suzuki Y."/>
            <person name="Nishikawa T."/>
            <person name="Otsuki T."/>
            <person name="Sugiyama T."/>
            <person name="Irie R."/>
            <person name="Wakamatsu A."/>
            <person name="Hayashi K."/>
            <person name="Sato H."/>
            <person name="Nagai K."/>
            <person name="Kimura K."/>
            <person name="Makita H."/>
            <person name="Sekine M."/>
            <person name="Obayashi M."/>
            <person name="Nishi T."/>
            <person name="Shibahara T."/>
            <person name="Tanaka T."/>
            <person name="Ishii S."/>
            <person name="Yamamoto J."/>
            <person name="Saito K."/>
            <person name="Kawai Y."/>
            <person name="Isono Y."/>
            <person name="Nakamura Y."/>
            <person name="Nagahari K."/>
            <person name="Murakami K."/>
            <person name="Yasuda T."/>
            <person name="Iwayanagi T."/>
            <person name="Wagatsuma M."/>
            <person name="Shiratori A."/>
            <person name="Sudo H."/>
            <person name="Hosoiri T."/>
            <person name="Kaku Y."/>
            <person name="Kodaira H."/>
            <person name="Kondo H."/>
            <person name="Sugawara M."/>
            <person name="Takahashi M."/>
            <person name="Kanda K."/>
            <person name="Yokoi T."/>
            <person name="Furuya T."/>
            <person name="Kikkawa E."/>
            <person name="Omura Y."/>
            <person name="Abe K."/>
            <person name="Kamihara K."/>
            <person name="Katsuta N."/>
            <person name="Sato K."/>
            <person name="Tanikawa M."/>
            <person name="Yamazaki M."/>
            <person name="Ninomiya K."/>
            <person name="Ishibashi T."/>
            <person name="Yamashita H."/>
            <person name="Murakawa K."/>
            <person name="Fujimori K."/>
            <person name="Tanai H."/>
            <person name="Kimata M."/>
            <person name="Watanabe M."/>
            <person name="Hiraoka S."/>
            <person name="Chiba Y."/>
            <person name="Ishida S."/>
            <person name="Ono Y."/>
            <person name="Takiguchi S."/>
            <person name="Watanabe S."/>
            <person name="Yosida M."/>
            <person name="Hotuta T."/>
            <person name="Kusano J."/>
            <person name="Kanehori K."/>
            <person name="Takahashi-Fujii A."/>
            <person name="Hara H."/>
            <person name="Tanase T.-O."/>
            <person name="Nomura Y."/>
            <person name="Togiya S."/>
            <person name="Komai F."/>
            <person name="Hara R."/>
            <person name="Takeuchi K."/>
            <person name="Arita M."/>
            <person name="Imose N."/>
            <person name="Musashino K."/>
            <person name="Yuuki H."/>
            <person name="Oshima A."/>
            <person name="Sasaki N."/>
            <person name="Aotsuka S."/>
            <person name="Yoshikawa Y."/>
            <person name="Matsunawa H."/>
            <person name="Ichihara T."/>
            <person name="Shiohata N."/>
            <person name="Sano S."/>
            <person name="Moriya S."/>
            <person name="Momiyama H."/>
            <person name="Satoh N."/>
            <person name="Takami S."/>
            <person name="Terashima Y."/>
            <person name="Suzuki O."/>
            <person name="Nakagawa S."/>
            <person name="Senoh A."/>
            <person name="Mizoguchi H."/>
            <person name="Goto Y."/>
            <person name="Shimizu F."/>
            <person name="Wakebe H."/>
            <person name="Hishigaki H."/>
            <person name="Watanabe T."/>
            <person name="Sugiyama A."/>
            <person name="Takemoto M."/>
            <person name="Kawakami B."/>
            <person name="Yamazaki M."/>
            <person name="Watanabe K."/>
            <person name="Kumagai A."/>
            <person name="Itakura S."/>
            <person name="Fukuzumi Y."/>
            <person name="Fujimori Y."/>
            <person name="Komiyama M."/>
            <person name="Tashiro H."/>
            <person name="Tanigami A."/>
            <person name="Fujiwara T."/>
            <person name="Ono T."/>
            <person name="Yamada K."/>
            <person name="Fujii Y."/>
            <person name="Ozaki K."/>
            <person name="Hirao M."/>
            <person name="Ohmori Y."/>
            <person name="Kawabata A."/>
            <person name="Hikiji T."/>
            <person name="Kobatake N."/>
            <person name="Inagaki H."/>
            <person name="Ikema Y."/>
            <person name="Okamoto S."/>
            <person name="Okitani R."/>
            <person name="Kawakami T."/>
            <person name="Noguchi S."/>
            <person name="Itoh T."/>
            <person name="Shigeta K."/>
            <person name="Senba T."/>
            <person name="Matsumura K."/>
            <person name="Nakajima Y."/>
            <person name="Mizuno T."/>
            <person name="Morinaga M."/>
            <person name="Sasaki M."/>
            <person name="Togashi T."/>
            <person name="Oyama M."/>
            <person name="Hata H."/>
            <person name="Watanabe M."/>
            <person name="Komatsu T."/>
            <person name="Mizushima-Sugano J."/>
            <person name="Satoh T."/>
            <person name="Shirai Y."/>
            <person name="Takahashi Y."/>
            <person name="Nakagawa K."/>
            <person name="Okumura K."/>
            <person name="Nagase T."/>
            <person name="Nomura N."/>
            <person name="Kikuchi H."/>
            <person name="Masuho Y."/>
            <person name="Yamashita R."/>
            <person name="Nakai K."/>
            <person name="Yada T."/>
            <person name="Nakamura Y."/>
            <person name="Ohara O."/>
            <person name="Isogai T."/>
            <person name="Sugano S."/>
        </authorList>
    </citation>
    <scope>NUCLEOTIDE SEQUENCE [LARGE SCALE MRNA] (ISOFORM 2)</scope>
    <source>
        <tissue>Salivary gland</tissue>
    </source>
</reference>
<reference key="2">
    <citation type="journal article" date="2007" name="BMC Genomics">
        <title>The full-ORF clone resource of the German cDNA consortium.</title>
        <authorList>
            <person name="Bechtel S."/>
            <person name="Rosenfelder H."/>
            <person name="Duda A."/>
            <person name="Schmidt C.P."/>
            <person name="Ernst U."/>
            <person name="Wellenreuther R."/>
            <person name="Mehrle A."/>
            <person name="Schuster C."/>
            <person name="Bahr A."/>
            <person name="Bloecker H."/>
            <person name="Heubner D."/>
            <person name="Hoerlein A."/>
            <person name="Michel G."/>
            <person name="Wedler H."/>
            <person name="Koehrer K."/>
            <person name="Ottenwaelder B."/>
            <person name="Poustka A."/>
            <person name="Wiemann S."/>
            <person name="Schupp I."/>
        </authorList>
    </citation>
    <scope>NUCLEOTIDE SEQUENCE [LARGE SCALE MRNA] (ISOFORM 1)</scope>
    <source>
        <tissue>Salivary gland</tissue>
    </source>
</reference>
<reference key="3">
    <citation type="journal article" date="2006" name="Nature">
        <title>DNA sequence of human chromosome 17 and analysis of rearrangement in the human lineage.</title>
        <authorList>
            <person name="Zody M.C."/>
            <person name="Garber M."/>
            <person name="Adams D.J."/>
            <person name="Sharpe T."/>
            <person name="Harrow J."/>
            <person name="Lupski J.R."/>
            <person name="Nicholson C."/>
            <person name="Searle S.M."/>
            <person name="Wilming L."/>
            <person name="Young S.K."/>
            <person name="Abouelleil A."/>
            <person name="Allen N.R."/>
            <person name="Bi W."/>
            <person name="Bloom T."/>
            <person name="Borowsky M.L."/>
            <person name="Bugalter B.E."/>
            <person name="Butler J."/>
            <person name="Chang J.L."/>
            <person name="Chen C.-K."/>
            <person name="Cook A."/>
            <person name="Corum B."/>
            <person name="Cuomo C.A."/>
            <person name="de Jong P.J."/>
            <person name="DeCaprio D."/>
            <person name="Dewar K."/>
            <person name="FitzGerald M."/>
            <person name="Gilbert J."/>
            <person name="Gibson R."/>
            <person name="Gnerre S."/>
            <person name="Goldstein S."/>
            <person name="Grafham D.V."/>
            <person name="Grocock R."/>
            <person name="Hafez N."/>
            <person name="Hagopian D.S."/>
            <person name="Hart E."/>
            <person name="Norman C.H."/>
            <person name="Humphray S."/>
            <person name="Jaffe D.B."/>
            <person name="Jones M."/>
            <person name="Kamal M."/>
            <person name="Khodiyar V.K."/>
            <person name="LaButti K."/>
            <person name="Laird G."/>
            <person name="Lehoczky J."/>
            <person name="Liu X."/>
            <person name="Lokyitsang T."/>
            <person name="Loveland J."/>
            <person name="Lui A."/>
            <person name="Macdonald P."/>
            <person name="Major J.E."/>
            <person name="Matthews L."/>
            <person name="Mauceli E."/>
            <person name="McCarroll S.A."/>
            <person name="Mihalev A.H."/>
            <person name="Mudge J."/>
            <person name="Nguyen C."/>
            <person name="Nicol R."/>
            <person name="O'Leary S.B."/>
            <person name="Osoegawa K."/>
            <person name="Schwartz D.C."/>
            <person name="Shaw-Smith C."/>
            <person name="Stankiewicz P."/>
            <person name="Steward C."/>
            <person name="Swarbreck D."/>
            <person name="Venkataraman V."/>
            <person name="Whittaker C.A."/>
            <person name="Yang X."/>
            <person name="Zimmer A.R."/>
            <person name="Bradley A."/>
            <person name="Hubbard T."/>
            <person name="Birren B.W."/>
            <person name="Rogers J."/>
            <person name="Lander E.S."/>
            <person name="Nusbaum C."/>
        </authorList>
    </citation>
    <scope>NUCLEOTIDE SEQUENCE [LARGE SCALE GENOMIC DNA]</scope>
</reference>
<reference key="4">
    <citation type="submission" date="2005-07" db="EMBL/GenBank/DDBJ databases">
        <authorList>
            <person name="Mural R.J."/>
            <person name="Istrail S."/>
            <person name="Sutton G."/>
            <person name="Florea L."/>
            <person name="Halpern A.L."/>
            <person name="Mobarry C.M."/>
            <person name="Lippert R."/>
            <person name="Walenz B."/>
            <person name="Shatkay H."/>
            <person name="Dew I."/>
            <person name="Miller J.R."/>
            <person name="Flanigan M.J."/>
            <person name="Edwards N.J."/>
            <person name="Bolanos R."/>
            <person name="Fasulo D."/>
            <person name="Halldorsson B.V."/>
            <person name="Hannenhalli S."/>
            <person name="Turner R."/>
            <person name="Yooseph S."/>
            <person name="Lu F."/>
            <person name="Nusskern D.R."/>
            <person name="Shue B.C."/>
            <person name="Zheng X.H."/>
            <person name="Zhong F."/>
            <person name="Delcher A.L."/>
            <person name="Huson D.H."/>
            <person name="Kravitz S.A."/>
            <person name="Mouchard L."/>
            <person name="Reinert K."/>
            <person name="Remington K.A."/>
            <person name="Clark A.G."/>
            <person name="Waterman M.S."/>
            <person name="Eichler E.E."/>
            <person name="Adams M.D."/>
            <person name="Hunkapiller M.W."/>
            <person name="Myers E.W."/>
            <person name="Venter J.C."/>
        </authorList>
    </citation>
    <scope>NUCLEOTIDE SEQUENCE [LARGE SCALE GENOMIC DNA]</scope>
</reference>
<reference key="5">
    <citation type="journal article" date="2004" name="Genome Res.">
        <title>The status, quality, and expansion of the NIH full-length cDNA project: the Mammalian Gene Collection (MGC).</title>
        <authorList>
            <consortium name="The MGC Project Team"/>
        </authorList>
    </citation>
    <scope>NUCLEOTIDE SEQUENCE [LARGE SCALE MRNA] (ISOFORMS 1 AND 2)</scope>
    <source>
        <tissue>Lung</tissue>
        <tissue>Skin</tissue>
    </source>
</reference>
<reference key="6">
    <citation type="submission" date="2009-03" db="UniProtKB">
        <authorList>
            <person name="Bienvenut W.V."/>
            <person name="Waridel P."/>
            <person name="Quadroni M."/>
        </authorList>
    </citation>
    <scope>PROTEIN SEQUENCE OF 2-26; 69-77; 80-90; 138-156; 192-238; 274-291 AND 430-442 (ISOFORM 1)</scope>
    <scope>CLEAVAGE OF INITIATOR METHIONINE</scope>
    <scope>ACETYLATION AT ALA-2</scope>
    <scope>IDENTIFICATION BY MASS SPECTROMETRY</scope>
    <source>
        <tissue>Embryonic kidney</tissue>
    </source>
</reference>
<reference key="7">
    <citation type="journal article" date="1996" name="DNA Cell Biol.">
        <title>Identification and characterization of two novel tetratricopeptide repeat-containing genes.</title>
        <authorList>
            <person name="Murthy A.E."/>
            <person name="Bernards A."/>
            <person name="Church D."/>
            <person name="Wasmuth J."/>
            <person name="Gusella J.F."/>
        </authorList>
    </citation>
    <scope>NUCLEOTIDE SEQUENCE [MRNA] OF 3-494 (ISOFORM 1)</scope>
</reference>
<reference key="8">
    <citation type="journal article" date="1999" name="J. Biol. Chem.">
        <title>Specific interaction of the 70-kDa heat shock cognate protein with the tetratricopeptide repeats.</title>
        <authorList>
            <person name="Liu F.H."/>
            <person name="Wu S.J."/>
            <person name="Hu S.M."/>
            <person name="Hsiao C.D."/>
            <person name="Wang C."/>
        </authorList>
    </citation>
    <scope>INTERACTION WITH HSPA8</scope>
</reference>
<reference key="9">
    <citation type="journal article" date="2001" name="Biochem. Biophys. Res. Commun.">
        <title>The J domain of Tpr2 regulates its interaction with the proapoptotic and cell-cycle checkpoint protein, Rad9.</title>
        <authorList>
            <person name="Xiang S.L."/>
            <person name="Kumano T."/>
            <person name="Iwasaki S.I."/>
            <person name="Sun X."/>
            <person name="Yoshioka K."/>
            <person name="Yamamoto K.C."/>
        </authorList>
    </citation>
    <scope>INTERACTION WITH RAD9A; HUS1 AND RAD1</scope>
    <scope>SUBCELLULAR LOCATION</scope>
    <scope>MUTAGENESIS OF HIS-409</scope>
</reference>
<reference key="10">
    <citation type="journal article" date="2003" name="EMBO J.">
        <title>Cofactor Tpr2 combines two TPR domains and a J domain to regulate the Hsp70/Hsp90 chaperone system.</title>
        <authorList>
            <person name="Brychzy A."/>
            <person name="Rein T."/>
            <person name="Winklhofer K.F."/>
            <person name="Hartl F.U."/>
            <person name="Young J.C."/>
            <person name="Obermann W.M."/>
        </authorList>
    </citation>
    <scope>FUNCTION</scope>
    <scope>INTERACTION WITH HSP90AA1 AND HSPA1A/B</scope>
    <scope>SUBCELLULAR LOCATION</scope>
    <scope>MUTAGENESIS OF ARG-101; ARG-333 AND HIS-409</scope>
</reference>
<reference key="11">
    <citation type="journal article" date="2003" name="Mol. Pharmacol.">
        <title>Cytoplasmic accumulation of the nuclear receptor CAR by a tetratricopeptide repeat protein in HepG2 cells.</title>
        <authorList>
            <person name="Kobayashi K."/>
            <person name="Sueyoshi T."/>
            <person name="Inoue K."/>
            <person name="Moore R."/>
            <person name="Negishi M."/>
        </authorList>
    </citation>
    <scope>INTERACTION WITH NR1I3</scope>
</reference>
<reference key="12">
    <citation type="journal article" date="2005" name="Nat. Biotechnol.">
        <title>Immunoaffinity profiling of tyrosine phosphorylation in cancer cells.</title>
        <authorList>
            <person name="Rush J."/>
            <person name="Moritz A."/>
            <person name="Lee K.A."/>
            <person name="Guo A."/>
            <person name="Goss V.L."/>
            <person name="Spek E.J."/>
            <person name="Zhang H."/>
            <person name="Zha X.-M."/>
            <person name="Polakiewicz R.D."/>
            <person name="Comb M.J."/>
        </authorList>
    </citation>
    <scope>IDENTIFICATION BY MASS SPECTROMETRY [LARGE SCALE ANALYSIS]</scope>
</reference>
<reference key="13">
    <citation type="journal article" date="2008" name="Biochemistry">
        <title>Role of the cochaperone Tpr2 in Hsp90 chaperoning.</title>
        <authorList>
            <person name="Moffatt N.S."/>
            <person name="Bruinsma E."/>
            <person name="Uhl C."/>
            <person name="Obermann W.M."/>
            <person name="Toft D."/>
        </authorList>
    </citation>
    <scope>FUNCTION</scope>
    <scope>INTERACTION WITH HSP90AB1; HSPA1A/B AND PGR</scope>
</reference>
<reference key="14">
    <citation type="journal article" date="2011" name="BMC Syst. Biol.">
        <title>Initial characterization of the human central proteome.</title>
        <authorList>
            <person name="Burkard T.R."/>
            <person name="Planyavsky M."/>
            <person name="Kaupe I."/>
            <person name="Breitwieser F.P."/>
            <person name="Buerckstuemmer T."/>
            <person name="Bennett K.L."/>
            <person name="Superti-Furga G."/>
            <person name="Colinge J."/>
        </authorList>
    </citation>
    <scope>IDENTIFICATION BY MASS SPECTROMETRY [LARGE SCALE ANALYSIS]</scope>
</reference>
<reference key="15">
    <citation type="journal article" date="2012" name="Proc. Natl. Acad. Sci. U.S.A.">
        <title>N-terminal acetylome analyses and functional insights of the N-terminal acetyltransferase NatB.</title>
        <authorList>
            <person name="Van Damme P."/>
            <person name="Lasa M."/>
            <person name="Polevoda B."/>
            <person name="Gazquez C."/>
            <person name="Elosegui-Artola A."/>
            <person name="Kim D.S."/>
            <person name="De Juan-Pardo E."/>
            <person name="Demeyer K."/>
            <person name="Hole K."/>
            <person name="Larrea E."/>
            <person name="Timmerman E."/>
            <person name="Prieto J."/>
            <person name="Arnesen T."/>
            <person name="Sherman F."/>
            <person name="Gevaert K."/>
            <person name="Aldabe R."/>
        </authorList>
    </citation>
    <scope>ACETYLATION [LARGE SCALE ANALYSIS] AT ALA-2</scope>
    <scope>CLEAVAGE OF INITIATOR METHIONINE [LARGE SCALE ANALYSIS]</scope>
    <scope>IDENTIFICATION BY MASS SPECTROMETRY [LARGE SCALE ANALYSIS]</scope>
</reference>
<reference key="16">
    <citation type="journal article" date="2013" name="J. Proteome Res.">
        <title>Toward a comprehensive characterization of a human cancer cell phosphoproteome.</title>
        <authorList>
            <person name="Zhou H."/>
            <person name="Di Palma S."/>
            <person name="Preisinger C."/>
            <person name="Peng M."/>
            <person name="Polat A.N."/>
            <person name="Heck A.J."/>
            <person name="Mohammed S."/>
        </authorList>
    </citation>
    <scope>PHOSPHORYLATION [LARGE SCALE ANALYSIS] AT SER-393</scope>
    <scope>IDENTIFICATION BY MASS SPECTROMETRY [LARGE SCALE ANALYSIS]</scope>
    <source>
        <tissue>Cervix carcinoma</tissue>
        <tissue>Erythroleukemia</tissue>
    </source>
</reference>
<name>DNJC7_HUMAN</name>
<proteinExistence type="evidence at protein level"/>
<organism>
    <name type="scientific">Homo sapiens</name>
    <name type="common">Human</name>
    <dbReference type="NCBI Taxonomy" id="9606"/>
    <lineage>
        <taxon>Eukaryota</taxon>
        <taxon>Metazoa</taxon>
        <taxon>Chordata</taxon>
        <taxon>Craniata</taxon>
        <taxon>Vertebrata</taxon>
        <taxon>Euteleostomi</taxon>
        <taxon>Mammalia</taxon>
        <taxon>Eutheria</taxon>
        <taxon>Euarchontoglires</taxon>
        <taxon>Primates</taxon>
        <taxon>Haplorrhini</taxon>
        <taxon>Catarrhini</taxon>
        <taxon>Hominidae</taxon>
        <taxon>Homo</taxon>
    </lineage>
</organism>
<protein>
    <recommendedName>
        <fullName>DnaJ homolog subfamily C member 7</fullName>
    </recommendedName>
    <alternativeName>
        <fullName>Tetratricopeptide repeat protein 2</fullName>
        <shortName>TPR repeat protein 2</shortName>
    </alternativeName>
</protein>
<dbReference type="EMBL" id="AK298860">
    <property type="protein sequence ID" value="BAG60982.1"/>
    <property type="molecule type" value="mRNA"/>
</dbReference>
<dbReference type="EMBL" id="BX647209">
    <property type="status" value="NOT_ANNOTATED_CDS"/>
    <property type="molecule type" value="mRNA"/>
</dbReference>
<dbReference type="EMBL" id="AC105024">
    <property type="status" value="NOT_ANNOTATED_CDS"/>
    <property type="molecule type" value="Genomic_DNA"/>
</dbReference>
<dbReference type="EMBL" id="AC125257">
    <property type="status" value="NOT_ANNOTATED_CDS"/>
    <property type="molecule type" value="Genomic_DNA"/>
</dbReference>
<dbReference type="EMBL" id="CH471152">
    <property type="protein sequence ID" value="EAW60788.1"/>
    <property type="molecule type" value="Genomic_DNA"/>
</dbReference>
<dbReference type="EMBL" id="BC003601">
    <property type="protein sequence ID" value="AAH03601.1"/>
    <property type="molecule type" value="mRNA"/>
</dbReference>
<dbReference type="EMBL" id="BC011837">
    <property type="protein sequence ID" value="AAH11837.2"/>
    <property type="molecule type" value="mRNA"/>
</dbReference>
<dbReference type="EMBL" id="BC033772">
    <property type="protein sequence ID" value="AAH33772.1"/>
    <property type="status" value="ALT_INIT"/>
    <property type="molecule type" value="mRNA"/>
</dbReference>
<dbReference type="EMBL" id="U46571">
    <property type="protein sequence ID" value="AAB36872.1"/>
    <property type="status" value="ALT_INIT"/>
    <property type="molecule type" value="mRNA"/>
</dbReference>
<dbReference type="CCDS" id="CCDS45677.1">
    <molecule id="Q99615-1"/>
</dbReference>
<dbReference type="CCDS" id="CCDS45678.1">
    <molecule id="Q99615-2"/>
</dbReference>
<dbReference type="RefSeq" id="NP_001138238.1">
    <molecule id="Q99615-2"/>
    <property type="nucleotide sequence ID" value="NM_001144766.3"/>
</dbReference>
<dbReference type="RefSeq" id="NP_003306.3">
    <molecule id="Q99615-1"/>
    <property type="nucleotide sequence ID" value="NM_003315.4"/>
</dbReference>
<dbReference type="RefSeq" id="XP_011523469.1">
    <molecule id="Q99615-2"/>
    <property type="nucleotide sequence ID" value="XM_011525167.4"/>
</dbReference>
<dbReference type="RefSeq" id="XP_011523470.1">
    <property type="nucleotide sequence ID" value="XM_011525168.2"/>
</dbReference>
<dbReference type="RefSeq" id="XP_011523471.1">
    <molecule id="Q99615-2"/>
    <property type="nucleotide sequence ID" value="XM_011525169.4"/>
</dbReference>
<dbReference type="RefSeq" id="XP_016880483.1">
    <molecule id="Q99615-2"/>
    <property type="nucleotide sequence ID" value="XM_017024994.3"/>
</dbReference>
<dbReference type="RefSeq" id="XP_054173014.1">
    <molecule id="Q99615-2"/>
    <property type="nucleotide sequence ID" value="XM_054317039.1"/>
</dbReference>
<dbReference type="RefSeq" id="XP_054173015.1">
    <molecule id="Q99615-2"/>
    <property type="nucleotide sequence ID" value="XM_054317040.1"/>
</dbReference>
<dbReference type="RefSeq" id="XP_054173016.1">
    <molecule id="Q99615-2"/>
    <property type="nucleotide sequence ID" value="XM_054317041.1"/>
</dbReference>
<dbReference type="SMR" id="Q99615"/>
<dbReference type="BioGRID" id="113117">
    <property type="interactions" value="476"/>
</dbReference>
<dbReference type="CORUM" id="Q99615"/>
<dbReference type="FunCoup" id="Q99615">
    <property type="interactions" value="3720"/>
</dbReference>
<dbReference type="IntAct" id="Q99615">
    <property type="interactions" value="186"/>
</dbReference>
<dbReference type="MINT" id="Q99615"/>
<dbReference type="STRING" id="9606.ENSP00000406463"/>
<dbReference type="GlyGen" id="Q99615">
    <property type="glycosylation" value="1 site, 1 O-linked glycan (1 site)"/>
</dbReference>
<dbReference type="iPTMnet" id="Q99615"/>
<dbReference type="MetOSite" id="Q99615"/>
<dbReference type="PhosphoSitePlus" id="Q99615"/>
<dbReference type="SwissPalm" id="Q99615"/>
<dbReference type="BioMuta" id="DNAJC7"/>
<dbReference type="DMDM" id="46397879"/>
<dbReference type="jPOST" id="Q99615"/>
<dbReference type="MassIVE" id="Q99615"/>
<dbReference type="PaxDb" id="9606-ENSP00000406463"/>
<dbReference type="PeptideAtlas" id="Q99615"/>
<dbReference type="ProteomicsDB" id="69491"/>
<dbReference type="ProteomicsDB" id="78359">
    <molecule id="Q99615-1"/>
</dbReference>
<dbReference type="Pumba" id="Q99615"/>
<dbReference type="Antibodypedia" id="8072">
    <property type="antibodies" value="225 antibodies from 28 providers"/>
</dbReference>
<dbReference type="DNASU" id="7266"/>
<dbReference type="Ensembl" id="ENST00000316603.12">
    <molecule id="Q99615-2"/>
    <property type="protein sequence ID" value="ENSP00000313311.7"/>
    <property type="gene ID" value="ENSG00000168259.17"/>
</dbReference>
<dbReference type="Ensembl" id="ENST00000426588.7">
    <molecule id="Q99615-2"/>
    <property type="protein sequence ID" value="ENSP00000394327.2"/>
    <property type="gene ID" value="ENSG00000168259.17"/>
</dbReference>
<dbReference type="Ensembl" id="ENST00000457167.9">
    <molecule id="Q99615-1"/>
    <property type="protein sequence ID" value="ENSP00000406463.2"/>
    <property type="gene ID" value="ENSG00000168259.17"/>
</dbReference>
<dbReference type="Ensembl" id="ENST00000590774.6">
    <molecule id="Q99615-2"/>
    <property type="protein sequence ID" value="ENSP00000465340.2"/>
    <property type="gene ID" value="ENSG00000168259.17"/>
</dbReference>
<dbReference type="Ensembl" id="ENST00000674166.1">
    <molecule id="Q99615-2"/>
    <property type="protein sequence ID" value="ENSP00000501364.1"/>
    <property type="gene ID" value="ENSG00000168259.17"/>
</dbReference>
<dbReference type="Ensembl" id="ENST00000674252.1">
    <molecule id="Q99615-2"/>
    <property type="protein sequence ID" value="ENSP00000501366.1"/>
    <property type="gene ID" value="ENSG00000168259.17"/>
</dbReference>
<dbReference type="Ensembl" id="ENST00000674287.1">
    <molecule id="Q99615-2"/>
    <property type="protein sequence ID" value="ENSP00000501482.1"/>
    <property type="gene ID" value="ENSG00000168259.17"/>
</dbReference>
<dbReference type="Ensembl" id="ENST00000674303.1">
    <molecule id="Q99615-2"/>
    <property type="protein sequence ID" value="ENSP00000501468.1"/>
    <property type="gene ID" value="ENSG00000168259.17"/>
</dbReference>
<dbReference type="GeneID" id="7266"/>
<dbReference type="KEGG" id="hsa:7266"/>
<dbReference type="MANE-Select" id="ENST00000457167.9">
    <property type="protein sequence ID" value="ENSP00000406463.2"/>
    <property type="RefSeq nucleotide sequence ID" value="NM_003315.4"/>
    <property type="RefSeq protein sequence ID" value="NP_003306.3"/>
</dbReference>
<dbReference type="UCSC" id="uc002hyo.4">
    <molecule id="Q99615-1"/>
    <property type="organism name" value="human"/>
</dbReference>
<dbReference type="AGR" id="HGNC:12392"/>
<dbReference type="CTD" id="7266"/>
<dbReference type="DisGeNET" id="7266"/>
<dbReference type="GeneCards" id="DNAJC7"/>
<dbReference type="HGNC" id="HGNC:12392">
    <property type="gene designation" value="DNAJC7"/>
</dbReference>
<dbReference type="HPA" id="ENSG00000168259">
    <property type="expression patterns" value="Low tissue specificity"/>
</dbReference>
<dbReference type="MalaCards" id="DNAJC7"/>
<dbReference type="MIM" id="601964">
    <property type="type" value="gene"/>
</dbReference>
<dbReference type="neXtProt" id="NX_Q99615"/>
<dbReference type="OpenTargets" id="ENSG00000168259"/>
<dbReference type="PharmGKB" id="PA27424"/>
<dbReference type="VEuPathDB" id="HostDB:ENSG00000168259"/>
<dbReference type="eggNOG" id="KOG0550">
    <property type="taxonomic scope" value="Eukaryota"/>
</dbReference>
<dbReference type="GeneTree" id="ENSGT00940000155338"/>
<dbReference type="HOGENOM" id="CLU_015935_3_1_1"/>
<dbReference type="InParanoid" id="Q99615"/>
<dbReference type="OrthoDB" id="765884at2759"/>
<dbReference type="PAN-GO" id="Q99615">
    <property type="GO annotations" value="1 GO annotation based on evolutionary models"/>
</dbReference>
<dbReference type="PhylomeDB" id="Q99615"/>
<dbReference type="TreeFam" id="TF105166"/>
<dbReference type="PathwayCommons" id="Q99615"/>
<dbReference type="Reactome" id="R-HSA-3371453">
    <property type="pathway name" value="Regulation of HSF1-mediated heat shock response"/>
</dbReference>
<dbReference type="SignaLink" id="Q99615"/>
<dbReference type="BioGRID-ORCS" id="7266">
    <property type="hits" value="20 hits in 1153 CRISPR screens"/>
</dbReference>
<dbReference type="CD-CODE" id="DEE660B4">
    <property type="entry name" value="Stress granule"/>
</dbReference>
<dbReference type="ChiTaRS" id="DNAJC7">
    <property type="organism name" value="human"/>
</dbReference>
<dbReference type="GeneWiki" id="DNAJC7"/>
<dbReference type="GenomeRNAi" id="7266"/>
<dbReference type="Pharos" id="Q99615">
    <property type="development level" value="Tbio"/>
</dbReference>
<dbReference type="PRO" id="PR:Q99615"/>
<dbReference type="Proteomes" id="UP000005640">
    <property type="component" value="Chromosome 17"/>
</dbReference>
<dbReference type="RNAct" id="Q99615">
    <property type="molecule type" value="protein"/>
</dbReference>
<dbReference type="Bgee" id="ENSG00000168259">
    <property type="expression patterns" value="Expressed in nucleus accumbens and 206 other cell types or tissues"/>
</dbReference>
<dbReference type="ExpressionAtlas" id="Q99615">
    <property type="expression patterns" value="baseline and differential"/>
</dbReference>
<dbReference type="GO" id="GO:0005737">
    <property type="term" value="C:cytoplasm"/>
    <property type="evidence" value="ECO:0000314"/>
    <property type="project" value="UniProtKB"/>
</dbReference>
<dbReference type="GO" id="GO:0005856">
    <property type="term" value="C:cytoskeleton"/>
    <property type="evidence" value="ECO:0007669"/>
    <property type="project" value="UniProtKB-SubCell"/>
</dbReference>
<dbReference type="GO" id="GO:0005829">
    <property type="term" value="C:cytosol"/>
    <property type="evidence" value="ECO:0000314"/>
    <property type="project" value="HPA"/>
</dbReference>
<dbReference type="GO" id="GO:0070062">
    <property type="term" value="C:extracellular exosome"/>
    <property type="evidence" value="ECO:0007005"/>
    <property type="project" value="UniProtKB"/>
</dbReference>
<dbReference type="GO" id="GO:0016020">
    <property type="term" value="C:membrane"/>
    <property type="evidence" value="ECO:0007005"/>
    <property type="project" value="UniProtKB"/>
</dbReference>
<dbReference type="GO" id="GO:0005654">
    <property type="term" value="C:nucleoplasm"/>
    <property type="evidence" value="ECO:0000314"/>
    <property type="project" value="HPA"/>
</dbReference>
<dbReference type="GO" id="GO:0001671">
    <property type="term" value="F:ATPase activator activity"/>
    <property type="evidence" value="ECO:0000304"/>
    <property type="project" value="Reactome"/>
</dbReference>
<dbReference type="GO" id="GO:0031072">
    <property type="term" value="F:heat shock protein binding"/>
    <property type="evidence" value="ECO:0000353"/>
    <property type="project" value="UniProtKB"/>
</dbReference>
<dbReference type="GO" id="GO:0051085">
    <property type="term" value="P:chaperone cofactor-dependent protein refolding"/>
    <property type="evidence" value="ECO:0000314"/>
    <property type="project" value="UniProtKB"/>
</dbReference>
<dbReference type="GO" id="GO:0006457">
    <property type="term" value="P:protein folding"/>
    <property type="evidence" value="ECO:0000304"/>
    <property type="project" value="ProtInc"/>
</dbReference>
<dbReference type="GO" id="GO:1900034">
    <property type="term" value="P:regulation of cellular response to heat"/>
    <property type="evidence" value="ECO:0000304"/>
    <property type="project" value="Reactome"/>
</dbReference>
<dbReference type="CDD" id="cd06257">
    <property type="entry name" value="DnaJ"/>
    <property type="match status" value="1"/>
</dbReference>
<dbReference type="FunFam" id="1.10.287.110:FF:000018">
    <property type="entry name" value="DnaJ (Hsp40) homolog, subfamily C, member 7"/>
    <property type="match status" value="1"/>
</dbReference>
<dbReference type="FunFam" id="1.25.40.10:FF:000097">
    <property type="entry name" value="DnaJ homolog subfamily C member 7 homolog"/>
    <property type="match status" value="1"/>
</dbReference>
<dbReference type="Gene3D" id="1.10.287.110">
    <property type="entry name" value="DnaJ domain"/>
    <property type="match status" value="1"/>
</dbReference>
<dbReference type="Gene3D" id="1.25.40.10">
    <property type="entry name" value="Tetratricopeptide repeat domain"/>
    <property type="match status" value="1"/>
</dbReference>
<dbReference type="InterPro" id="IPR001623">
    <property type="entry name" value="DnaJ_domain"/>
</dbReference>
<dbReference type="InterPro" id="IPR036869">
    <property type="entry name" value="J_dom_sf"/>
</dbReference>
<dbReference type="InterPro" id="IPR011990">
    <property type="entry name" value="TPR-like_helical_dom_sf"/>
</dbReference>
<dbReference type="InterPro" id="IPR019734">
    <property type="entry name" value="TPR_rpt"/>
</dbReference>
<dbReference type="PANTHER" id="PTHR45188:SF2">
    <property type="entry name" value="DNAJ HOMOLOG SUBFAMILY C MEMBER 7"/>
    <property type="match status" value="1"/>
</dbReference>
<dbReference type="PANTHER" id="PTHR45188">
    <property type="entry name" value="DNAJ PROTEIN P58IPK HOMOLOG"/>
    <property type="match status" value="1"/>
</dbReference>
<dbReference type="Pfam" id="PF00226">
    <property type="entry name" value="DnaJ"/>
    <property type="match status" value="1"/>
</dbReference>
<dbReference type="Pfam" id="PF13414">
    <property type="entry name" value="TPR_11"/>
    <property type="match status" value="1"/>
</dbReference>
<dbReference type="Pfam" id="PF13432">
    <property type="entry name" value="TPR_16"/>
    <property type="match status" value="1"/>
</dbReference>
<dbReference type="Pfam" id="PF13181">
    <property type="entry name" value="TPR_8"/>
    <property type="match status" value="2"/>
</dbReference>
<dbReference type="PRINTS" id="PR00625">
    <property type="entry name" value="JDOMAIN"/>
</dbReference>
<dbReference type="SMART" id="SM00271">
    <property type="entry name" value="DnaJ"/>
    <property type="match status" value="1"/>
</dbReference>
<dbReference type="SMART" id="SM00028">
    <property type="entry name" value="TPR"/>
    <property type="match status" value="8"/>
</dbReference>
<dbReference type="SUPFAM" id="SSF46565">
    <property type="entry name" value="Chaperone J-domain"/>
    <property type="match status" value="1"/>
</dbReference>
<dbReference type="SUPFAM" id="SSF48452">
    <property type="entry name" value="TPR-like"/>
    <property type="match status" value="3"/>
</dbReference>
<dbReference type="PROSITE" id="PS50076">
    <property type="entry name" value="DNAJ_2"/>
    <property type="match status" value="1"/>
</dbReference>
<dbReference type="PROSITE" id="PS50005">
    <property type="entry name" value="TPR"/>
    <property type="match status" value="8"/>
</dbReference>
<dbReference type="PROSITE" id="PS50293">
    <property type="entry name" value="TPR_REGION"/>
    <property type="match status" value="1"/>
</dbReference>
<feature type="initiator methionine" description="Removed" evidence="9 13">
    <location>
        <position position="1"/>
    </location>
</feature>
<feature type="chain" id="PRO_0000071058" description="DnaJ homolog subfamily C member 7">
    <location>
        <begin position="2"/>
        <end position="494"/>
    </location>
</feature>
<feature type="repeat" description="TPR 1">
    <location>
        <begin position="28"/>
        <end position="61"/>
    </location>
</feature>
<feature type="repeat" description="TPR 2">
    <location>
        <begin position="62"/>
        <end position="95"/>
    </location>
</feature>
<feature type="repeat" description="TPR 3">
    <location>
        <begin position="96"/>
        <end position="129"/>
    </location>
</feature>
<feature type="repeat" description="TPR 4">
    <location>
        <begin position="142"/>
        <end position="175"/>
    </location>
</feature>
<feature type="repeat" description="TPR 5">
    <location>
        <begin position="177"/>
        <end position="209"/>
    </location>
</feature>
<feature type="repeat" description="TPR 6">
    <location>
        <begin position="210"/>
        <end position="243"/>
    </location>
</feature>
<feature type="repeat" description="TPR 7">
    <location>
        <begin position="256"/>
        <end position="289"/>
    </location>
</feature>
<feature type="repeat" description="TPR 8">
    <location>
        <begin position="294"/>
        <end position="327"/>
    </location>
</feature>
<feature type="repeat" description="TPR 9">
    <location>
        <begin position="328"/>
        <end position="361"/>
    </location>
</feature>
<feature type="domain" description="J" evidence="3">
    <location>
        <begin position="381"/>
        <end position="451"/>
    </location>
</feature>
<feature type="modified residue" description="N-acetylalanine" evidence="9 13">
    <location>
        <position position="2"/>
    </location>
</feature>
<feature type="modified residue" description="Phosphoserine" evidence="14">
    <location>
        <position position="393"/>
    </location>
</feature>
<feature type="splice variant" id="VSP_044279" description="In isoform 2." evidence="10 11">
    <location>
        <begin position="1"/>
        <end position="56"/>
    </location>
</feature>
<feature type="mutagenesis site" description="Impairs interaction with HSP90AA1 and HSPA1A/B. Abolishes interaction with HSP90AA1 and HSPA1A/B; when associated with A-333 and A-409." evidence="6">
    <original>R</original>
    <variation>A</variation>
    <location>
        <position position="101"/>
    </location>
</feature>
<feature type="mutagenesis site" description="Impairs interaction with HSP90AA1 and HSPA1A/B. Abolishes interaction with HSP90AA1 and HSPA1A/B; when associated with A-101 and A-409." evidence="6">
    <original>R</original>
    <variation>A</variation>
    <location>
        <position position="333"/>
    </location>
</feature>
<feature type="mutagenesis site" description="Predominantly nuclear localization. Abolishes interaction with HSP90AA1 and HSPA1A/B; when associated with A-101 and A-333." evidence="5 6">
    <original>H</original>
    <variation>A</variation>
    <location>
        <position position="409"/>
    </location>
</feature>
<feature type="sequence conflict" description="In Ref. 1; BX647209." evidence="12" ref="1">
    <original>K</original>
    <variation>R</variation>
    <location>
        <position position="375"/>
    </location>
</feature>
<accession>Q99615</accession>
<accession>Q7Z784</accession>
<keyword id="KW-0007">Acetylation</keyword>
<keyword id="KW-0025">Alternative splicing</keyword>
<keyword id="KW-0143">Chaperone</keyword>
<keyword id="KW-0963">Cytoplasm</keyword>
<keyword id="KW-0206">Cytoskeleton</keyword>
<keyword id="KW-0903">Direct protein sequencing</keyword>
<keyword id="KW-0539">Nucleus</keyword>
<keyword id="KW-0597">Phosphoprotein</keyword>
<keyword id="KW-1267">Proteomics identification</keyword>
<keyword id="KW-1185">Reference proteome</keyword>
<keyword id="KW-0677">Repeat</keyword>
<keyword id="KW-0802">TPR repeat</keyword>